<reference key="1">
    <citation type="journal article" date="1994" name="Virology">
        <title>The complete DNA sequence of Autographa californica nuclear polyhedrosis virus.</title>
        <authorList>
            <person name="Ayres M.D."/>
            <person name="Howard S.C."/>
            <person name="Kuzio J."/>
            <person name="Lopez-Ferber M."/>
            <person name="Possee R.D."/>
        </authorList>
    </citation>
    <scope>NUCLEOTIDE SEQUENCE [LARGE SCALE GENOMIC DNA]</scope>
    <source>
        <strain>C6</strain>
    </source>
</reference>
<reference key="2">
    <citation type="journal article" date="1998" name="Virology">
        <title>Mapping of ORF121, a factor that activates baculovirus early gene expression.</title>
        <authorList>
            <person name="Gong M."/>
            <person name="Jin J."/>
            <person name="Guarino L.A."/>
        </authorList>
    </citation>
    <scope>FUNCTION</scope>
</reference>
<organismHost>
    <name type="scientific">Lepidoptera</name>
    <name type="common">butterflies and moths</name>
    <dbReference type="NCBI Taxonomy" id="7088"/>
</organismHost>
<comment type="function">
    <text evidence="1">Stimulates the expression of 39k gene most probably by increasing IE1 expression.</text>
</comment>
<evidence type="ECO:0000269" key="1">
    <source>
    </source>
</evidence>
<name>AC121_NPVAC</name>
<protein>
    <recommendedName>
        <fullName>Transactivator protein ORF121</fullName>
    </recommendedName>
</protein>
<keyword id="KW-1185">Reference proteome</keyword>
<keyword id="KW-0804">Transcription</keyword>
<keyword id="KW-0805">Transcription regulation</keyword>
<organism>
    <name type="scientific">Autographa californica nuclear polyhedrosis virus</name>
    <name type="common">AcMNPV</name>
    <dbReference type="NCBI Taxonomy" id="46015"/>
    <lineage>
        <taxon>Viruses</taxon>
        <taxon>Viruses incertae sedis</taxon>
        <taxon>Naldaviricetes</taxon>
        <taxon>Lefavirales</taxon>
        <taxon>Baculoviridae</taxon>
        <taxon>Alphabaculovirus</taxon>
        <taxon>Alphabaculovirus aucalifornicae</taxon>
    </lineage>
</organism>
<gene>
    <name type="primary">AC121</name>
</gene>
<accession>P41674</accession>
<dbReference type="EMBL" id="L22858">
    <property type="protein sequence ID" value="AAA66751.1"/>
    <property type="molecule type" value="Genomic_DNA"/>
</dbReference>
<dbReference type="PIR" id="B72865">
    <property type="entry name" value="B72865"/>
</dbReference>
<dbReference type="KEGG" id="vg:1403954"/>
<dbReference type="OrthoDB" id="37921at10239"/>
<dbReference type="Proteomes" id="UP000008292">
    <property type="component" value="Segment"/>
</dbReference>
<proteinExistence type="predicted"/>
<feature type="chain" id="PRO_0000133061" description="Transactivator protein ORF121">
    <location>
        <begin position="1"/>
        <end position="58"/>
    </location>
</feature>
<sequence>MMSSSQIIVCNKINIFVCKYNLLQINFTLNQSVFVFVVRSSNLVFQPLGMVKMRRSNC</sequence>